<dbReference type="EMBL" id="AF301016">
    <property type="protein sequence ID" value="AAG34365.1"/>
    <property type="status" value="ALT_INIT"/>
    <property type="molecule type" value="mRNA"/>
</dbReference>
<dbReference type="EMBL" id="AF337812">
    <property type="protein sequence ID" value="AAK38275.1"/>
    <property type="molecule type" value="mRNA"/>
</dbReference>
<dbReference type="EMBL" id="AF275260">
    <property type="protein sequence ID" value="AAG31750.1"/>
    <property type="molecule type" value="mRNA"/>
</dbReference>
<dbReference type="EMBL" id="EF064742">
    <property type="protein sequence ID" value="ABK41925.1"/>
    <property type="status" value="ALT_INIT"/>
    <property type="molecule type" value="Genomic_DNA"/>
</dbReference>
<dbReference type="EMBL" id="AY358909">
    <property type="protein sequence ID" value="AAQ89268.1"/>
    <property type="molecule type" value="mRNA"/>
</dbReference>
<dbReference type="EMBL" id="AK027389">
    <property type="protein sequence ID" value="BAB55078.1"/>
    <property type="status" value="ALT_INIT"/>
    <property type="molecule type" value="mRNA"/>
</dbReference>
<dbReference type="EMBL" id="AK292114">
    <property type="protein sequence ID" value="BAF84803.1"/>
    <property type="status" value="ALT_INIT"/>
    <property type="molecule type" value="mRNA"/>
</dbReference>
<dbReference type="EMBL" id="AK315017">
    <property type="protein sequence ID" value="BAG37507.1"/>
    <property type="status" value="ALT_INIT"/>
    <property type="molecule type" value="mRNA"/>
</dbReference>
<dbReference type="EMBL" id="BC017588">
    <property type="protein sequence ID" value="AAH17588.1"/>
    <property type="status" value="ALT_INIT"/>
    <property type="molecule type" value="mRNA"/>
</dbReference>
<dbReference type="EMBL" id="BC044930">
    <property type="protein sequence ID" value="AAH44930.1"/>
    <property type="status" value="ALT_INIT"/>
    <property type="molecule type" value="mRNA"/>
</dbReference>
<dbReference type="CCDS" id="CCDS11052.2"/>
<dbReference type="RefSeq" id="NP_001094282.2">
    <property type="nucleotide sequence ID" value="NM_001100812.2"/>
</dbReference>
<dbReference type="RefSeq" id="NP_001373738.1">
    <property type="nucleotide sequence ID" value="NM_001386809.1"/>
</dbReference>
<dbReference type="RefSeq" id="NP_071342.2">
    <property type="nucleotide sequence ID" value="NM_022059.3"/>
</dbReference>
<dbReference type="SMR" id="Q9H2A7"/>
<dbReference type="BioGRID" id="121805">
    <property type="interactions" value="91"/>
</dbReference>
<dbReference type="FunCoup" id="Q9H2A7">
    <property type="interactions" value="547"/>
</dbReference>
<dbReference type="IntAct" id="Q9H2A7">
    <property type="interactions" value="19"/>
</dbReference>
<dbReference type="STRING" id="9606.ENSP00000293778"/>
<dbReference type="TCDB" id="9.B.173.1.1">
    <property type="family name" value="the chemokine, cxcl16 (cxcl16) family"/>
</dbReference>
<dbReference type="GlyCosmos" id="Q9H2A7">
    <property type="glycosylation" value="3 sites, 2 glycans"/>
</dbReference>
<dbReference type="GlyGen" id="Q9H2A7">
    <property type="glycosylation" value="15 sites, 3 N-linked glycans (1 site), 3 O-linked glycans (13 sites)"/>
</dbReference>
<dbReference type="iPTMnet" id="Q9H2A7"/>
<dbReference type="PhosphoSitePlus" id="Q9H2A7"/>
<dbReference type="BioMuta" id="CXCL16"/>
<dbReference type="DMDM" id="209572770"/>
<dbReference type="jPOST" id="Q9H2A7"/>
<dbReference type="MassIVE" id="Q9H2A7"/>
<dbReference type="PaxDb" id="9606-ENSP00000293778"/>
<dbReference type="PeptideAtlas" id="Q9H2A7"/>
<dbReference type="ProteomicsDB" id="80520"/>
<dbReference type="Antibodypedia" id="11299">
    <property type="antibodies" value="482 antibodies from 35 providers"/>
</dbReference>
<dbReference type="DNASU" id="58191"/>
<dbReference type="Ensembl" id="ENST00000293778.12">
    <property type="protein sequence ID" value="ENSP00000293778.7"/>
    <property type="gene ID" value="ENSG00000161921.17"/>
</dbReference>
<dbReference type="Ensembl" id="ENST00000574412.6">
    <property type="protein sequence ID" value="ENSP00000459592.2"/>
    <property type="gene ID" value="ENSG00000161921.17"/>
</dbReference>
<dbReference type="GeneID" id="58191"/>
<dbReference type="KEGG" id="hsa:58191"/>
<dbReference type="MANE-Select" id="ENST00000293778.12">
    <property type="protein sequence ID" value="ENSP00000293778.7"/>
    <property type="RefSeq nucleotide sequence ID" value="NM_001386809.1"/>
    <property type="RefSeq protein sequence ID" value="NP_001373738.1"/>
</dbReference>
<dbReference type="UCSC" id="uc002fyr.6">
    <property type="organism name" value="human"/>
</dbReference>
<dbReference type="AGR" id="HGNC:16642"/>
<dbReference type="CTD" id="58191"/>
<dbReference type="DisGeNET" id="58191"/>
<dbReference type="GeneCards" id="CXCL16"/>
<dbReference type="HGNC" id="HGNC:16642">
    <property type="gene designation" value="CXCL16"/>
</dbReference>
<dbReference type="HPA" id="ENSG00000161921">
    <property type="expression patterns" value="Low tissue specificity"/>
</dbReference>
<dbReference type="MIM" id="605398">
    <property type="type" value="gene"/>
</dbReference>
<dbReference type="neXtProt" id="NX_Q9H2A7"/>
<dbReference type="OpenTargets" id="ENSG00000161921"/>
<dbReference type="PharmGKB" id="PA27057"/>
<dbReference type="VEuPathDB" id="HostDB:ENSG00000161921"/>
<dbReference type="eggNOG" id="ENOG502T0B7">
    <property type="taxonomic scope" value="Eukaryota"/>
</dbReference>
<dbReference type="GeneTree" id="ENSGT00390000002148"/>
<dbReference type="HOGENOM" id="CLU_049889_0_0_1"/>
<dbReference type="InParanoid" id="Q9H2A7"/>
<dbReference type="OMA" id="RCNSYIR"/>
<dbReference type="OrthoDB" id="9836360at2759"/>
<dbReference type="PAN-GO" id="Q9H2A7">
    <property type="GO annotations" value="6 GO annotations based on evolutionary models"/>
</dbReference>
<dbReference type="PhylomeDB" id="Q9H2A7"/>
<dbReference type="TreeFam" id="TF337941"/>
<dbReference type="PathwayCommons" id="Q9H2A7"/>
<dbReference type="Reactome" id="R-HSA-380108">
    <property type="pathway name" value="Chemokine receptors bind chemokines"/>
</dbReference>
<dbReference type="Reactome" id="R-HSA-418594">
    <property type="pathway name" value="G alpha (i) signalling events"/>
</dbReference>
<dbReference type="SignaLink" id="Q9H2A7"/>
<dbReference type="BioGRID-ORCS" id="58191">
    <property type="hits" value="10 hits in 1151 CRISPR screens"/>
</dbReference>
<dbReference type="ChiTaRS" id="CXCL16">
    <property type="organism name" value="human"/>
</dbReference>
<dbReference type="GenomeRNAi" id="58191"/>
<dbReference type="Pharos" id="Q9H2A7">
    <property type="development level" value="Tbio"/>
</dbReference>
<dbReference type="PRO" id="PR:Q9H2A7"/>
<dbReference type="Proteomes" id="UP000005640">
    <property type="component" value="Chromosome 17"/>
</dbReference>
<dbReference type="RNAct" id="Q9H2A7">
    <property type="molecule type" value="protein"/>
</dbReference>
<dbReference type="Bgee" id="ENSG00000161921">
    <property type="expression patterns" value="Expressed in left testis and 163 other cell types or tissues"/>
</dbReference>
<dbReference type="ExpressionAtlas" id="Q9H2A7">
    <property type="expression patterns" value="baseline and differential"/>
</dbReference>
<dbReference type="GO" id="GO:0005576">
    <property type="term" value="C:extracellular region"/>
    <property type="evidence" value="ECO:0000304"/>
    <property type="project" value="Reactome"/>
</dbReference>
<dbReference type="GO" id="GO:0005615">
    <property type="term" value="C:extracellular space"/>
    <property type="evidence" value="ECO:0000314"/>
    <property type="project" value="BHF-UCL"/>
</dbReference>
<dbReference type="GO" id="GO:0016020">
    <property type="term" value="C:membrane"/>
    <property type="evidence" value="ECO:0000304"/>
    <property type="project" value="UniProtKB"/>
</dbReference>
<dbReference type="GO" id="GO:0005886">
    <property type="term" value="C:plasma membrane"/>
    <property type="evidence" value="ECO:0007669"/>
    <property type="project" value="UniProtKB-SubCell"/>
</dbReference>
<dbReference type="GO" id="GO:0008009">
    <property type="term" value="F:chemokine activity"/>
    <property type="evidence" value="ECO:0000314"/>
    <property type="project" value="BHF-UCL"/>
</dbReference>
<dbReference type="GO" id="GO:0005041">
    <property type="term" value="F:low-density lipoprotein particle receptor activity"/>
    <property type="evidence" value="ECO:0000250"/>
    <property type="project" value="UniProtKB"/>
</dbReference>
<dbReference type="GO" id="GO:0005044">
    <property type="term" value="F:scavenger receptor activity"/>
    <property type="evidence" value="ECO:0000318"/>
    <property type="project" value="GO_Central"/>
</dbReference>
<dbReference type="GO" id="GO:0006935">
    <property type="term" value="P:chemotaxis"/>
    <property type="evidence" value="ECO:0000303"/>
    <property type="project" value="UniProtKB"/>
</dbReference>
<dbReference type="GO" id="GO:0030307">
    <property type="term" value="P:positive regulation of cell growth"/>
    <property type="evidence" value="ECO:0000315"/>
    <property type="project" value="BHF-UCL"/>
</dbReference>
<dbReference type="GO" id="GO:0030335">
    <property type="term" value="P:positive regulation of cell migration"/>
    <property type="evidence" value="ECO:0000315"/>
    <property type="project" value="BHF-UCL"/>
</dbReference>
<dbReference type="GO" id="GO:0006898">
    <property type="term" value="P:receptor-mediated endocytosis"/>
    <property type="evidence" value="ECO:0000303"/>
    <property type="project" value="UniProtKB"/>
</dbReference>
<dbReference type="GO" id="GO:0034097">
    <property type="term" value="P:response to cytokine"/>
    <property type="evidence" value="ECO:0000314"/>
    <property type="project" value="BHF-UCL"/>
</dbReference>
<dbReference type="GO" id="GO:0034612">
    <property type="term" value="P:response to tumor necrosis factor"/>
    <property type="evidence" value="ECO:0000314"/>
    <property type="project" value="BHF-UCL"/>
</dbReference>
<dbReference type="GO" id="GO:0034341">
    <property type="term" value="P:response to type II interferon"/>
    <property type="evidence" value="ECO:0000314"/>
    <property type="project" value="BHF-UCL"/>
</dbReference>
<dbReference type="GO" id="GO:0010818">
    <property type="term" value="P:T cell chemotaxis"/>
    <property type="evidence" value="ECO:0000318"/>
    <property type="project" value="GO_Central"/>
</dbReference>
<dbReference type="InterPro" id="IPR026296">
    <property type="entry name" value="CXCL16"/>
</dbReference>
<dbReference type="InterPro" id="IPR048585">
    <property type="entry name" value="CXCL16_dom"/>
</dbReference>
<dbReference type="PANTHER" id="PTHR14385:SF0">
    <property type="entry name" value="C-X-C MOTIF CHEMOKINE 16"/>
    <property type="match status" value="1"/>
</dbReference>
<dbReference type="PANTHER" id="PTHR14385">
    <property type="entry name" value="CXC CHEMOKINE LIGAND"/>
    <property type="match status" value="1"/>
</dbReference>
<dbReference type="Pfam" id="PF20902">
    <property type="entry name" value="CXCL16"/>
    <property type="match status" value="1"/>
</dbReference>
<name>CXL16_HUMAN</name>
<sequence length="254" mass="27579">MGRDLRPGSRVLLLLLLLLLVYLTQPGNGNEGSVTGSCYCGKRISSDSPPSVQFMNRLRKHLRAYHRCLYYTRFQLLSWSVCGGNKDPWVQELMSCLDLKECGHAYSGIVAHQKHLLPTSPPISQASEGASSDIHTPAQMLLSTLQSTQRPTLPVGSLSSDKELTRPNETTIHTAGHSLAAGPEAGENQKQPEKNAGPTARTSATVPVLCLLAIIFILTAALSYVLCKRRRGQSPQSSPDLPVHYIPVAPDSNT</sequence>
<accession>Q9H2A7</accession>
<accession>A0N0N4</accession>
<accession>A8K7U9</accession>
<accession>B2RCB0</accession>
<accession>Q8TC80</accession>
<accession>Q96K63</accession>
<accession>Q9BXD6</accession>
<accession>Q9H2F6</accession>
<protein>
    <recommendedName>
        <fullName>C-X-C motif chemokine 16</fullName>
    </recommendedName>
    <alternativeName>
        <fullName>Scavenger receptor for phosphatidylserine and oxidized low density lipoprotein</fullName>
        <shortName>SR-PSOX</shortName>
    </alternativeName>
    <alternativeName>
        <fullName>Small-inducible cytokine B16</fullName>
    </alternativeName>
    <alternativeName>
        <fullName>Transmembrane chemokine CXCL16</fullName>
    </alternativeName>
</protein>
<feature type="signal peptide" evidence="2">
    <location>
        <begin position="1"/>
        <end position="29"/>
    </location>
</feature>
<feature type="chain" id="PRO_0000005118" description="C-X-C motif chemokine 16">
    <location>
        <begin position="30"/>
        <end position="254"/>
    </location>
</feature>
<feature type="topological domain" description="Extracellular" evidence="2">
    <location>
        <begin position="30"/>
        <end position="205"/>
    </location>
</feature>
<feature type="transmembrane region" description="Helical" evidence="2">
    <location>
        <begin position="206"/>
        <end position="226"/>
    </location>
</feature>
<feature type="topological domain" description="Cytoplasmic" evidence="2">
    <location>
        <begin position="227"/>
        <end position="254"/>
    </location>
</feature>
<feature type="region of interest" description="Chemokine">
    <location>
        <begin position="32"/>
        <end position="107"/>
    </location>
</feature>
<feature type="region of interest" description="Disordered" evidence="3">
    <location>
        <begin position="146"/>
        <end position="165"/>
    </location>
</feature>
<feature type="region of interest" description="Disordered" evidence="3">
    <location>
        <begin position="178"/>
        <end position="200"/>
    </location>
</feature>
<feature type="region of interest" description="Disordered" evidence="3">
    <location>
        <begin position="231"/>
        <end position="254"/>
    </location>
</feature>
<feature type="glycosylation site" description="N-linked (GlcNAc...) asparagine" evidence="2">
    <location>
        <position position="168"/>
    </location>
</feature>
<feature type="disulfide bond" evidence="1">
    <location>
        <begin position="38"/>
        <end position="68"/>
    </location>
</feature>
<feature type="disulfide bond" evidence="1">
    <location>
        <begin position="40"/>
        <end position="82"/>
    </location>
</feature>
<feature type="sequence variant" id="VAR_015424" evidence="4 6 7">
    <original>I</original>
    <variation>T</variation>
    <location>
        <position position="123"/>
    </location>
</feature>
<feature type="sequence variant" id="VAR_015425" description="In dbSNP:rs2277680." evidence="4 5 6 7">
    <original>A</original>
    <variation>V</variation>
    <location>
        <position position="181"/>
    </location>
</feature>
<feature type="sequence conflict" description="In Ref. 6; BAG37507." evidence="8" ref="6">
    <original>R</original>
    <variation>W</variation>
    <location>
        <position position="67"/>
    </location>
</feature>
<feature type="sequence conflict" description="In Ref. 6; BAB55078." evidence="8" ref="6">
    <original>H</original>
    <variation>L</variation>
    <location>
        <position position="135"/>
    </location>
</feature>
<feature type="sequence conflict" description="In Ref. 6; BAG37507." evidence="8" ref="6">
    <original>S</original>
    <variation>P</variation>
    <location>
        <position position="143"/>
    </location>
</feature>
<feature type="sequence conflict" description="In Ref. 2; AAK38275." evidence="8" ref="2">
    <original>L</original>
    <variation>P</variation>
    <location>
        <position position="222"/>
    </location>
</feature>
<keyword id="KW-1003">Cell membrane</keyword>
<keyword id="KW-0145">Chemotaxis</keyword>
<keyword id="KW-0202">Cytokine</keyword>
<keyword id="KW-1015">Disulfide bond</keyword>
<keyword id="KW-0325">Glycoprotein</keyword>
<keyword id="KW-0472">Membrane</keyword>
<keyword id="KW-1267">Proteomics identification</keyword>
<keyword id="KW-1185">Reference proteome</keyword>
<keyword id="KW-0964">Secreted</keyword>
<keyword id="KW-0732">Signal</keyword>
<keyword id="KW-0812">Transmembrane</keyword>
<keyword id="KW-1133">Transmembrane helix</keyword>
<comment type="function">
    <text evidence="1">Acts as a scavenger receptor on macrophages, which specifically binds to OxLDL (oxidized low density lipoprotein), suggesting that it may be involved in pathophysiology such as atherogenesis (By similarity). Induces a strong chemotactic response. Induces calcium mobilization. Binds to CXCR6/Bonzo.</text>
</comment>
<comment type="subcellular location">
    <subcellularLocation>
        <location evidence="8">Cell membrane</location>
        <topology evidence="8">Single-pass type I membrane protein</topology>
    </subcellularLocation>
    <subcellularLocation>
        <location>Secreted</location>
    </subcellularLocation>
    <text>Also exists as a soluble form.</text>
</comment>
<comment type="tissue specificity">
    <text>Expressed in T-cell areas. Expressed in spleen, lymph nodes, lung, kidney, small intestine and thymus. Weak expression in heart and liver and no expression in brain and bone marrow.</text>
</comment>
<comment type="PTM">
    <text>Glycosylated.</text>
</comment>
<comment type="similarity">
    <text evidence="8">Belongs to the intercrine alpha (chemokine CxC) family.</text>
</comment>
<comment type="sequence caution" evidence="8">
    <conflict type="erroneous initiation">
        <sequence resource="EMBL-CDS" id="AAG34365"/>
    </conflict>
</comment>
<comment type="sequence caution" evidence="8">
    <conflict type="erroneous initiation">
        <sequence resource="EMBL-CDS" id="AAH17588"/>
    </conflict>
</comment>
<comment type="sequence caution" evidence="8">
    <conflict type="erroneous initiation">
        <sequence resource="EMBL-CDS" id="AAH44930"/>
    </conflict>
</comment>
<comment type="sequence caution" evidence="8">
    <conflict type="erroneous initiation">
        <sequence resource="EMBL-CDS" id="ABK41925"/>
    </conflict>
</comment>
<comment type="sequence caution" evidence="8">
    <conflict type="erroneous initiation">
        <sequence resource="EMBL-CDS" id="BAB55078"/>
    </conflict>
</comment>
<comment type="sequence caution" evidence="8">
    <conflict type="erroneous initiation">
        <sequence resource="EMBL-CDS" id="BAF84803"/>
    </conflict>
</comment>
<comment type="sequence caution" evidence="8">
    <conflict type="erroneous initiation">
        <sequence resource="EMBL-CDS" id="BAG37507"/>
    </conflict>
</comment>
<comment type="online information" name="Wikipedia">
    <link uri="https://en.wikipedia.org/wiki/CXCL16"/>
    <text>CXCL16 entry</text>
</comment>
<organism>
    <name type="scientific">Homo sapiens</name>
    <name type="common">Human</name>
    <dbReference type="NCBI Taxonomy" id="9606"/>
    <lineage>
        <taxon>Eukaryota</taxon>
        <taxon>Metazoa</taxon>
        <taxon>Chordata</taxon>
        <taxon>Craniata</taxon>
        <taxon>Vertebrata</taxon>
        <taxon>Euteleostomi</taxon>
        <taxon>Mammalia</taxon>
        <taxon>Eutheria</taxon>
        <taxon>Euarchontoglires</taxon>
        <taxon>Primates</taxon>
        <taxon>Haplorrhini</taxon>
        <taxon>Catarrhini</taxon>
        <taxon>Hominidae</taxon>
        <taxon>Homo</taxon>
    </lineage>
</organism>
<proteinExistence type="evidence at protein level"/>
<evidence type="ECO:0000250" key="1"/>
<evidence type="ECO:0000255" key="2"/>
<evidence type="ECO:0000256" key="3">
    <source>
        <dbReference type="SAM" id="MobiDB-lite"/>
    </source>
</evidence>
<evidence type="ECO:0000269" key="4">
    <source>
    </source>
</evidence>
<evidence type="ECO:0000269" key="5">
    <source>
    </source>
</evidence>
<evidence type="ECO:0000269" key="6">
    <source>
    </source>
</evidence>
<evidence type="ECO:0000269" key="7">
    <source>
    </source>
</evidence>
<evidence type="ECO:0000305" key="8"/>
<reference key="1">
    <citation type="journal article" date="2000" name="Nat. Immunol.">
        <title>A transmembrane CXC chemokine is a ligand for HIV-coreceptor Bonzo.</title>
        <authorList>
            <person name="Matloubian M."/>
            <person name="David A."/>
            <person name="Engel S."/>
            <person name="Ryan J.E."/>
            <person name="Cyster J.G."/>
        </authorList>
    </citation>
    <scope>NUCLEOTIDE SEQUENCE [MRNA]</scope>
    <scope>VARIANTS THR-123 AND VAL-181</scope>
</reference>
<reference key="2">
    <citation type="journal article" date="2001" name="J. Immunol.">
        <title>Expression cloning of the strl33/bonzo/tymstr ligand reveals elements of cc, cxc, and cx3c chemokines.</title>
        <authorList>
            <person name="Wilbanks A."/>
            <person name="Zondlo S.C."/>
            <person name="Murphy K."/>
            <person name="Mak S."/>
            <person name="Soler D."/>
            <person name="Langdon P."/>
            <person name="Andrew D.P."/>
            <person name="Wu L."/>
            <person name="Briskin M."/>
        </authorList>
    </citation>
    <scope>NUCLEOTIDE SEQUENCE [MRNA]</scope>
    <scope>VARIANT VAL-181</scope>
</reference>
<reference key="3">
    <citation type="journal article" date="2000" name="J. Biol. Chem.">
        <title>Molecular cloning of a novel scavenger receptor for oxidized low density lipoprotein, SR-PSOX, on macrophages.</title>
        <authorList>
            <person name="Shimaoka T."/>
            <person name="Kume N."/>
            <person name="Minami M."/>
            <person name="Hayashida K."/>
            <person name="Kataoka H."/>
            <person name="Kita T."/>
            <person name="Yonehara S."/>
        </authorList>
    </citation>
    <scope>NUCLEOTIDE SEQUENCE [MRNA]</scope>
</reference>
<reference key="4">
    <citation type="submission" date="2006-10" db="EMBL/GenBank/DDBJ databases">
        <authorList>
            <person name="Livingston R.J."/>
            <person name="Shaffer T."/>
            <person name="McFarland I."/>
            <person name="Nguyen C.P."/>
            <person name="Stanaway I.B."/>
            <person name="Rajkumar N."/>
            <person name="Johnson E.J."/>
            <person name="da Ponte S.H."/>
            <person name="Willa H."/>
            <person name="Ahearn M.O."/>
            <person name="Bertucci C."/>
            <person name="Acklestad J."/>
            <person name="Carroll A."/>
            <person name="Swanson J."/>
            <person name="Gildersleeve H.I."/>
            <person name="Nickerson D.A."/>
        </authorList>
    </citation>
    <scope>NUCLEOTIDE SEQUENCE [GENOMIC DNA]</scope>
</reference>
<reference key="5">
    <citation type="journal article" date="2003" name="Genome Res.">
        <title>The secreted protein discovery initiative (SPDI), a large-scale effort to identify novel human secreted and transmembrane proteins: a bioinformatics assessment.</title>
        <authorList>
            <person name="Clark H.F."/>
            <person name="Gurney A.L."/>
            <person name="Abaya E."/>
            <person name="Baker K."/>
            <person name="Baldwin D.T."/>
            <person name="Brush J."/>
            <person name="Chen J."/>
            <person name="Chow B."/>
            <person name="Chui C."/>
            <person name="Crowley C."/>
            <person name="Currell B."/>
            <person name="Deuel B."/>
            <person name="Dowd P."/>
            <person name="Eaton D."/>
            <person name="Foster J.S."/>
            <person name="Grimaldi C."/>
            <person name="Gu Q."/>
            <person name="Hass P.E."/>
            <person name="Heldens S."/>
            <person name="Huang A."/>
            <person name="Kim H.S."/>
            <person name="Klimowski L."/>
            <person name="Jin Y."/>
            <person name="Johnson S."/>
            <person name="Lee J."/>
            <person name="Lewis L."/>
            <person name="Liao D."/>
            <person name="Mark M.R."/>
            <person name="Robbie E."/>
            <person name="Sanchez C."/>
            <person name="Schoenfeld J."/>
            <person name="Seshagiri S."/>
            <person name="Simmons L."/>
            <person name="Singh J."/>
            <person name="Smith V."/>
            <person name="Stinson J."/>
            <person name="Vagts A."/>
            <person name="Vandlen R.L."/>
            <person name="Watanabe C."/>
            <person name="Wieand D."/>
            <person name="Woods K."/>
            <person name="Xie M.-H."/>
            <person name="Yansura D.G."/>
            <person name="Yi S."/>
            <person name="Yu G."/>
            <person name="Yuan J."/>
            <person name="Zhang M."/>
            <person name="Zhang Z."/>
            <person name="Goddard A.D."/>
            <person name="Wood W.I."/>
            <person name="Godowski P.J."/>
            <person name="Gray A.M."/>
        </authorList>
    </citation>
    <scope>NUCLEOTIDE SEQUENCE [LARGE SCALE MRNA]</scope>
</reference>
<reference key="6">
    <citation type="journal article" date="2004" name="Nat. Genet.">
        <title>Complete sequencing and characterization of 21,243 full-length human cDNAs.</title>
        <authorList>
            <person name="Ota T."/>
            <person name="Suzuki Y."/>
            <person name="Nishikawa T."/>
            <person name="Otsuki T."/>
            <person name="Sugiyama T."/>
            <person name="Irie R."/>
            <person name="Wakamatsu A."/>
            <person name="Hayashi K."/>
            <person name="Sato H."/>
            <person name="Nagai K."/>
            <person name="Kimura K."/>
            <person name="Makita H."/>
            <person name="Sekine M."/>
            <person name="Obayashi M."/>
            <person name="Nishi T."/>
            <person name="Shibahara T."/>
            <person name="Tanaka T."/>
            <person name="Ishii S."/>
            <person name="Yamamoto J."/>
            <person name="Saito K."/>
            <person name="Kawai Y."/>
            <person name="Isono Y."/>
            <person name="Nakamura Y."/>
            <person name="Nagahari K."/>
            <person name="Murakami K."/>
            <person name="Yasuda T."/>
            <person name="Iwayanagi T."/>
            <person name="Wagatsuma M."/>
            <person name="Shiratori A."/>
            <person name="Sudo H."/>
            <person name="Hosoiri T."/>
            <person name="Kaku Y."/>
            <person name="Kodaira H."/>
            <person name="Kondo H."/>
            <person name="Sugawara M."/>
            <person name="Takahashi M."/>
            <person name="Kanda K."/>
            <person name="Yokoi T."/>
            <person name="Furuya T."/>
            <person name="Kikkawa E."/>
            <person name="Omura Y."/>
            <person name="Abe K."/>
            <person name="Kamihara K."/>
            <person name="Katsuta N."/>
            <person name="Sato K."/>
            <person name="Tanikawa M."/>
            <person name="Yamazaki M."/>
            <person name="Ninomiya K."/>
            <person name="Ishibashi T."/>
            <person name="Yamashita H."/>
            <person name="Murakawa K."/>
            <person name="Fujimori K."/>
            <person name="Tanai H."/>
            <person name="Kimata M."/>
            <person name="Watanabe M."/>
            <person name="Hiraoka S."/>
            <person name="Chiba Y."/>
            <person name="Ishida S."/>
            <person name="Ono Y."/>
            <person name="Takiguchi S."/>
            <person name="Watanabe S."/>
            <person name="Yosida M."/>
            <person name="Hotuta T."/>
            <person name="Kusano J."/>
            <person name="Kanehori K."/>
            <person name="Takahashi-Fujii A."/>
            <person name="Hara H."/>
            <person name="Tanase T.-O."/>
            <person name="Nomura Y."/>
            <person name="Togiya S."/>
            <person name="Komai F."/>
            <person name="Hara R."/>
            <person name="Takeuchi K."/>
            <person name="Arita M."/>
            <person name="Imose N."/>
            <person name="Musashino K."/>
            <person name="Yuuki H."/>
            <person name="Oshima A."/>
            <person name="Sasaki N."/>
            <person name="Aotsuka S."/>
            <person name="Yoshikawa Y."/>
            <person name="Matsunawa H."/>
            <person name="Ichihara T."/>
            <person name="Shiohata N."/>
            <person name="Sano S."/>
            <person name="Moriya S."/>
            <person name="Momiyama H."/>
            <person name="Satoh N."/>
            <person name="Takami S."/>
            <person name="Terashima Y."/>
            <person name="Suzuki O."/>
            <person name="Nakagawa S."/>
            <person name="Senoh A."/>
            <person name="Mizoguchi H."/>
            <person name="Goto Y."/>
            <person name="Shimizu F."/>
            <person name="Wakebe H."/>
            <person name="Hishigaki H."/>
            <person name="Watanabe T."/>
            <person name="Sugiyama A."/>
            <person name="Takemoto M."/>
            <person name="Kawakami B."/>
            <person name="Yamazaki M."/>
            <person name="Watanabe K."/>
            <person name="Kumagai A."/>
            <person name="Itakura S."/>
            <person name="Fukuzumi Y."/>
            <person name="Fujimori Y."/>
            <person name="Komiyama M."/>
            <person name="Tashiro H."/>
            <person name="Tanigami A."/>
            <person name="Fujiwara T."/>
            <person name="Ono T."/>
            <person name="Yamada K."/>
            <person name="Fujii Y."/>
            <person name="Ozaki K."/>
            <person name="Hirao M."/>
            <person name="Ohmori Y."/>
            <person name="Kawabata A."/>
            <person name="Hikiji T."/>
            <person name="Kobatake N."/>
            <person name="Inagaki H."/>
            <person name="Ikema Y."/>
            <person name="Okamoto S."/>
            <person name="Okitani R."/>
            <person name="Kawakami T."/>
            <person name="Noguchi S."/>
            <person name="Itoh T."/>
            <person name="Shigeta K."/>
            <person name="Senba T."/>
            <person name="Matsumura K."/>
            <person name="Nakajima Y."/>
            <person name="Mizuno T."/>
            <person name="Morinaga M."/>
            <person name="Sasaki M."/>
            <person name="Togashi T."/>
            <person name="Oyama M."/>
            <person name="Hata H."/>
            <person name="Watanabe M."/>
            <person name="Komatsu T."/>
            <person name="Mizushima-Sugano J."/>
            <person name="Satoh T."/>
            <person name="Shirai Y."/>
            <person name="Takahashi Y."/>
            <person name="Nakagawa K."/>
            <person name="Okumura K."/>
            <person name="Nagase T."/>
            <person name="Nomura N."/>
            <person name="Kikuchi H."/>
            <person name="Masuho Y."/>
            <person name="Yamashita R."/>
            <person name="Nakai K."/>
            <person name="Yada T."/>
            <person name="Nakamura Y."/>
            <person name="Ohara O."/>
            <person name="Isogai T."/>
            <person name="Sugano S."/>
        </authorList>
    </citation>
    <scope>NUCLEOTIDE SEQUENCE [LARGE SCALE MRNA]</scope>
    <scope>VARIANTS THR-123 AND VAL-181</scope>
    <source>
        <tissue>Mammary gland</tissue>
        <tissue>Synovium</tissue>
        <tissue>Tongue</tissue>
    </source>
</reference>
<reference key="7">
    <citation type="journal article" date="2004" name="Genome Res.">
        <title>The status, quality, and expansion of the NIH full-length cDNA project: the Mammalian Gene Collection (MGC).</title>
        <authorList>
            <consortium name="The MGC Project Team"/>
        </authorList>
    </citation>
    <scope>NUCLEOTIDE SEQUENCE [LARGE SCALE MRNA]</scope>
    <scope>VARIANTS THR-123 AND VAL-181</scope>
    <source>
        <tissue>Lung</tissue>
        <tissue>Spleen</tissue>
        <tissue>Testis</tissue>
    </source>
</reference>
<gene>
    <name type="primary">CXCL16</name>
    <name type="synonym">SCYB16</name>
    <name type="synonym">SRPSOX</name>
    <name type="ORF">UNQ2759/PRO6714</name>
</gene>